<comment type="subcellular location">
    <subcellularLocation>
        <location evidence="2">Nucleus</location>
    </subcellularLocation>
</comment>
<comment type="tissue specificity">
    <text evidence="2 3 5">Expressed in the shoot apex and leaves (PubMed:18315698). Expressed in dry seeds (PubMed:20490919). Expressed in roots and leaves (PubMed:24062085).</text>
</comment>
<comment type="induction">
    <text evidence="3 4 5 6 7">Induced by chilling and mannitol (PubMed:7948880, PubMed:9517002). Induced by drought stress (PubMed:20490919, PubMed:24062085, PubMed:9517002). Induced by salt stress (PubMed:20490919, PubMed:24062085, PubMed:9517002). Induced by abscisic acid (ABA) (PubMed:20490919, PubMed:24062085). Induced by D-allose and D-glucose (PubMed:23397192).</text>
</comment>
<comment type="similarity">
    <text evidence="10">Belongs to the LEA type 4 family.</text>
</comment>
<evidence type="ECO:0000256" key="1">
    <source>
        <dbReference type="SAM" id="MobiDB-lite"/>
    </source>
</evidence>
<evidence type="ECO:0000269" key="2">
    <source>
    </source>
</evidence>
<evidence type="ECO:0000269" key="3">
    <source>
    </source>
</evidence>
<evidence type="ECO:0000269" key="4">
    <source>
    </source>
</evidence>
<evidence type="ECO:0000269" key="5">
    <source>
    </source>
</evidence>
<evidence type="ECO:0000269" key="6">
    <source>
    </source>
</evidence>
<evidence type="ECO:0000269" key="7">
    <source>
    </source>
</evidence>
<evidence type="ECO:0000303" key="8">
    <source>
    </source>
</evidence>
<evidence type="ECO:0000303" key="9">
    <source ref="9"/>
</evidence>
<evidence type="ECO:0000305" key="10"/>
<evidence type="ECO:0000312" key="11">
    <source>
        <dbReference type="EMBL" id="BAB44029.1"/>
    </source>
</evidence>
<evidence type="ECO:0000312" key="12">
    <source>
        <dbReference type="EMBL" id="BAB86507.1"/>
    </source>
</evidence>
<evidence type="ECO:0000312" key="13">
    <source>
        <dbReference type="EMBL" id="BAF05922.1"/>
    </source>
</evidence>
<evidence type="ECO:0000312" key="14">
    <source>
        <dbReference type="EMBL" id="EAZ13254.1"/>
    </source>
</evidence>
<accession>Q94JF2</accession>
<accession>Q40709</accession>
<sequence length="215" mass="22132">MASQQERASYHAGETKARAEEKTGRMMGTAQEKAREAKDTASDAAGRAMGRGHGAKEATKEKAYETKDATKEKAYEAKDAASDATGRAMDKGRGAAGATRDKAYDAKDRAADTAQSAADRARDGAGQTGSYIGQTAEAAKQKAAGAAQYAKETAIAGKDKTGAVLQQAGEQVKSVAVGAKDAVMYTLGMSGDNKNNAAAGKDTSTYKPGTGSDYQ</sequence>
<proteinExistence type="evidence at transcript level"/>
<dbReference type="EMBL" id="D26536">
    <property type="protein sequence ID" value="BAA05537.1"/>
    <property type="molecule type" value="mRNA"/>
</dbReference>
<dbReference type="EMBL" id="AP003023">
    <property type="protein sequence ID" value="BAB44029.1"/>
    <property type="molecule type" value="Genomic_DNA"/>
</dbReference>
<dbReference type="EMBL" id="AP003381">
    <property type="protein sequence ID" value="BAB86507.1"/>
    <property type="molecule type" value="Genomic_DNA"/>
</dbReference>
<dbReference type="EMBL" id="AP008207">
    <property type="protein sequence ID" value="BAF05922.1"/>
    <property type="molecule type" value="Genomic_DNA"/>
</dbReference>
<dbReference type="EMBL" id="AP014957">
    <property type="protein sequence ID" value="BAS73926.1"/>
    <property type="molecule type" value="Genomic_DNA"/>
</dbReference>
<dbReference type="EMBL" id="CM000138">
    <property type="protein sequence ID" value="EAZ13254.1"/>
    <property type="molecule type" value="Genomic_DNA"/>
</dbReference>
<dbReference type="EMBL" id="AK064074">
    <property type="protein sequence ID" value="BAG88998.1"/>
    <property type="molecule type" value="mRNA"/>
</dbReference>
<dbReference type="PIR" id="S52642">
    <property type="entry name" value="S52642"/>
</dbReference>
<dbReference type="RefSeq" id="XP_015613488.1">
    <property type="nucleotide sequence ID" value="XM_015758002.1"/>
</dbReference>
<dbReference type="SMR" id="Q94JF2"/>
<dbReference type="FunCoup" id="Q94JF2">
    <property type="interactions" value="271"/>
</dbReference>
<dbReference type="STRING" id="39947.Q94JF2"/>
<dbReference type="PaxDb" id="39947-Q94JF2"/>
<dbReference type="EnsemblPlants" id="Os01t0705200-01">
    <property type="protein sequence ID" value="Os01t0705200-01"/>
    <property type="gene ID" value="Os01g0705200"/>
</dbReference>
<dbReference type="Gramene" id="Os01t0705200-01">
    <property type="protein sequence ID" value="Os01t0705200-01"/>
    <property type="gene ID" value="Os01g0705200"/>
</dbReference>
<dbReference type="KEGG" id="dosa:Os01g0705200"/>
<dbReference type="eggNOG" id="KOG4744">
    <property type="taxonomic scope" value="Eukaryota"/>
</dbReference>
<dbReference type="HOGENOM" id="CLU_100093_1_0_1"/>
<dbReference type="InParanoid" id="Q94JF2"/>
<dbReference type="OMA" id="VWRDHTH"/>
<dbReference type="OrthoDB" id="2193576at2759"/>
<dbReference type="Proteomes" id="UP000000763">
    <property type="component" value="Chromosome 1"/>
</dbReference>
<dbReference type="Proteomes" id="UP000007752">
    <property type="component" value="Chromosome 1"/>
</dbReference>
<dbReference type="Proteomes" id="UP000059680">
    <property type="component" value="Chromosome 1"/>
</dbReference>
<dbReference type="GO" id="GO:0005634">
    <property type="term" value="C:nucleus"/>
    <property type="evidence" value="ECO:0000314"/>
    <property type="project" value="UniProtKB"/>
</dbReference>
<dbReference type="Gene3D" id="6.10.140.1430">
    <property type="match status" value="1"/>
</dbReference>
<dbReference type="PANTHER" id="PTHR47372">
    <property type="entry name" value="DAUER UP-REGULATED-RELATED"/>
    <property type="match status" value="1"/>
</dbReference>
<dbReference type="PANTHER" id="PTHR47372:SF2">
    <property type="entry name" value="LATE EMBRYOGENESIS ABUNDANT PROTEIN 14"/>
    <property type="match status" value="1"/>
</dbReference>
<keyword id="KW-0539">Nucleus</keyword>
<keyword id="KW-1185">Reference proteome</keyword>
<feature type="chain" id="PRO_0000442721" description="Late embryogenesis abundant protein 14">
    <location>
        <begin position="1"/>
        <end position="215"/>
    </location>
</feature>
<feature type="region of interest" description="Disordered" evidence="1">
    <location>
        <begin position="1"/>
        <end position="129"/>
    </location>
</feature>
<feature type="region of interest" description="Disordered" evidence="1">
    <location>
        <begin position="190"/>
        <end position="215"/>
    </location>
</feature>
<feature type="compositionally biased region" description="Basic and acidic residues" evidence="1">
    <location>
        <begin position="13"/>
        <end position="24"/>
    </location>
</feature>
<feature type="compositionally biased region" description="Basic and acidic residues" evidence="1">
    <location>
        <begin position="32"/>
        <end position="41"/>
    </location>
</feature>
<feature type="compositionally biased region" description="Basic and acidic residues" evidence="1">
    <location>
        <begin position="54"/>
        <end position="81"/>
    </location>
</feature>
<feature type="compositionally biased region" description="Basic and acidic residues" evidence="1">
    <location>
        <begin position="88"/>
        <end position="111"/>
    </location>
</feature>
<feature type="compositionally biased region" description="Polar residues" evidence="1">
    <location>
        <begin position="192"/>
        <end position="215"/>
    </location>
</feature>
<feature type="sequence conflict" description="In Ref. 1; BAA05537." evidence="10" ref="1">
    <location>
        <position position="94"/>
    </location>
</feature>
<reference key="1">
    <citation type="journal article" date="1994" name="Plant Mol. Biol.">
        <title>Induction of chilling resistance by water stress, and cDNA sequence analysis and expression of water stress-regulated genes in rice.</title>
        <authorList>
            <person name="Takahashi R."/>
            <person name="Joshee N."/>
            <person name="Kitagawa Y."/>
        </authorList>
    </citation>
    <scope>NUCLEOTIDE SEQUENCE [MRNA]</scope>
    <scope>INDUCTION</scope>
    <source>
        <strain>cv. Somewake</strain>
    </source>
</reference>
<reference key="2">
    <citation type="journal article" date="2002" name="Nature">
        <title>The genome sequence and structure of rice chromosome 1.</title>
        <authorList>
            <person name="Sasaki T."/>
            <person name="Matsumoto T."/>
            <person name="Yamamoto K."/>
            <person name="Sakata K."/>
            <person name="Baba T."/>
            <person name="Katayose Y."/>
            <person name="Wu J."/>
            <person name="Niimura Y."/>
            <person name="Cheng Z."/>
            <person name="Nagamura Y."/>
            <person name="Antonio B.A."/>
            <person name="Kanamori H."/>
            <person name="Hosokawa S."/>
            <person name="Masukawa M."/>
            <person name="Arikawa K."/>
            <person name="Chiden Y."/>
            <person name="Hayashi M."/>
            <person name="Okamoto M."/>
            <person name="Ando T."/>
            <person name="Aoki H."/>
            <person name="Arita K."/>
            <person name="Hamada M."/>
            <person name="Harada C."/>
            <person name="Hijishita S."/>
            <person name="Honda M."/>
            <person name="Ichikawa Y."/>
            <person name="Idonuma A."/>
            <person name="Iijima M."/>
            <person name="Ikeda M."/>
            <person name="Ikeno M."/>
            <person name="Ito S."/>
            <person name="Ito T."/>
            <person name="Ito Y."/>
            <person name="Ito Y."/>
            <person name="Iwabuchi A."/>
            <person name="Kamiya K."/>
            <person name="Karasawa W."/>
            <person name="Katagiri S."/>
            <person name="Kikuta A."/>
            <person name="Kobayashi N."/>
            <person name="Kono I."/>
            <person name="Machita K."/>
            <person name="Maehara T."/>
            <person name="Mizuno H."/>
            <person name="Mizubayashi T."/>
            <person name="Mukai Y."/>
            <person name="Nagasaki H."/>
            <person name="Nakashima M."/>
            <person name="Nakama Y."/>
            <person name="Nakamichi Y."/>
            <person name="Nakamura M."/>
            <person name="Namiki N."/>
            <person name="Negishi M."/>
            <person name="Ohta I."/>
            <person name="Ono N."/>
            <person name="Saji S."/>
            <person name="Sakai K."/>
            <person name="Shibata M."/>
            <person name="Shimokawa T."/>
            <person name="Shomura A."/>
            <person name="Song J."/>
            <person name="Takazaki Y."/>
            <person name="Terasawa K."/>
            <person name="Tsuji K."/>
            <person name="Waki K."/>
            <person name="Yamagata H."/>
            <person name="Yamane H."/>
            <person name="Yoshiki S."/>
            <person name="Yoshihara R."/>
            <person name="Yukawa K."/>
            <person name="Zhong H."/>
            <person name="Iwama H."/>
            <person name="Endo T."/>
            <person name="Ito H."/>
            <person name="Hahn J.H."/>
            <person name="Kim H.-I."/>
            <person name="Eun M.-Y."/>
            <person name="Yano M."/>
            <person name="Jiang J."/>
            <person name="Gojobori T."/>
        </authorList>
    </citation>
    <scope>NUCLEOTIDE SEQUENCE [LARGE SCALE GENOMIC DNA]</scope>
    <source>
        <strain>cv. Nipponbare</strain>
    </source>
</reference>
<reference key="3">
    <citation type="journal article" date="2005" name="Nature">
        <title>The map-based sequence of the rice genome.</title>
        <authorList>
            <consortium name="International rice genome sequencing project (IRGSP)"/>
        </authorList>
    </citation>
    <scope>NUCLEOTIDE SEQUENCE [LARGE SCALE GENOMIC DNA]</scope>
    <source>
        <strain>cv. Nipponbare</strain>
    </source>
</reference>
<reference key="4">
    <citation type="journal article" date="2008" name="Nucleic Acids Res.">
        <title>The rice annotation project database (RAP-DB): 2008 update.</title>
        <authorList>
            <consortium name="The rice annotation project (RAP)"/>
        </authorList>
    </citation>
    <scope>GENOME REANNOTATION</scope>
    <source>
        <strain>cv. Nipponbare</strain>
    </source>
</reference>
<reference key="5">
    <citation type="journal article" date="2013" name="Rice">
        <title>Improvement of the Oryza sativa Nipponbare reference genome using next generation sequence and optical map data.</title>
        <authorList>
            <person name="Kawahara Y."/>
            <person name="de la Bastide M."/>
            <person name="Hamilton J.P."/>
            <person name="Kanamori H."/>
            <person name="McCombie W.R."/>
            <person name="Ouyang S."/>
            <person name="Schwartz D.C."/>
            <person name="Tanaka T."/>
            <person name="Wu J."/>
            <person name="Zhou S."/>
            <person name="Childs K.L."/>
            <person name="Davidson R.M."/>
            <person name="Lin H."/>
            <person name="Quesada-Ocampo L."/>
            <person name="Vaillancourt B."/>
            <person name="Sakai H."/>
            <person name="Lee S.S."/>
            <person name="Kim J."/>
            <person name="Numa H."/>
            <person name="Itoh T."/>
            <person name="Buell C.R."/>
            <person name="Matsumoto T."/>
        </authorList>
    </citation>
    <scope>GENOME REANNOTATION</scope>
    <source>
        <strain>cv. Nipponbare</strain>
    </source>
</reference>
<reference key="6">
    <citation type="journal article" date="2005" name="PLoS Biol.">
        <title>The genomes of Oryza sativa: a history of duplications.</title>
        <authorList>
            <person name="Yu J."/>
            <person name="Wang J."/>
            <person name="Lin W."/>
            <person name="Li S."/>
            <person name="Li H."/>
            <person name="Zhou J."/>
            <person name="Ni P."/>
            <person name="Dong W."/>
            <person name="Hu S."/>
            <person name="Zeng C."/>
            <person name="Zhang J."/>
            <person name="Zhang Y."/>
            <person name="Li R."/>
            <person name="Xu Z."/>
            <person name="Li S."/>
            <person name="Li X."/>
            <person name="Zheng H."/>
            <person name="Cong L."/>
            <person name="Lin L."/>
            <person name="Yin J."/>
            <person name="Geng J."/>
            <person name="Li G."/>
            <person name="Shi J."/>
            <person name="Liu J."/>
            <person name="Lv H."/>
            <person name="Li J."/>
            <person name="Wang J."/>
            <person name="Deng Y."/>
            <person name="Ran L."/>
            <person name="Shi X."/>
            <person name="Wang X."/>
            <person name="Wu Q."/>
            <person name="Li C."/>
            <person name="Ren X."/>
            <person name="Wang J."/>
            <person name="Wang X."/>
            <person name="Li D."/>
            <person name="Liu D."/>
            <person name="Zhang X."/>
            <person name="Ji Z."/>
            <person name="Zhao W."/>
            <person name="Sun Y."/>
            <person name="Zhang Z."/>
            <person name="Bao J."/>
            <person name="Han Y."/>
            <person name="Dong L."/>
            <person name="Ji J."/>
            <person name="Chen P."/>
            <person name="Wu S."/>
            <person name="Liu J."/>
            <person name="Xiao Y."/>
            <person name="Bu D."/>
            <person name="Tan J."/>
            <person name="Yang L."/>
            <person name="Ye C."/>
            <person name="Zhang J."/>
            <person name="Xu J."/>
            <person name="Zhou Y."/>
            <person name="Yu Y."/>
            <person name="Zhang B."/>
            <person name="Zhuang S."/>
            <person name="Wei H."/>
            <person name="Liu B."/>
            <person name="Lei M."/>
            <person name="Yu H."/>
            <person name="Li Y."/>
            <person name="Xu H."/>
            <person name="Wei S."/>
            <person name="He X."/>
            <person name="Fang L."/>
            <person name="Zhang Z."/>
            <person name="Zhang Y."/>
            <person name="Huang X."/>
            <person name="Su Z."/>
            <person name="Tong W."/>
            <person name="Li J."/>
            <person name="Tong Z."/>
            <person name="Li S."/>
            <person name="Ye J."/>
            <person name="Wang L."/>
            <person name="Fang L."/>
            <person name="Lei T."/>
            <person name="Chen C.-S."/>
            <person name="Chen H.-C."/>
            <person name="Xu Z."/>
            <person name="Li H."/>
            <person name="Huang H."/>
            <person name="Zhang F."/>
            <person name="Xu H."/>
            <person name="Li N."/>
            <person name="Zhao C."/>
            <person name="Li S."/>
            <person name="Dong L."/>
            <person name="Huang Y."/>
            <person name="Li L."/>
            <person name="Xi Y."/>
            <person name="Qi Q."/>
            <person name="Li W."/>
            <person name="Zhang B."/>
            <person name="Hu W."/>
            <person name="Zhang Y."/>
            <person name="Tian X."/>
            <person name="Jiao Y."/>
            <person name="Liang X."/>
            <person name="Jin J."/>
            <person name="Gao L."/>
            <person name="Zheng W."/>
            <person name="Hao B."/>
            <person name="Liu S.-M."/>
            <person name="Wang W."/>
            <person name="Yuan L."/>
            <person name="Cao M."/>
            <person name="McDermott J."/>
            <person name="Samudrala R."/>
            <person name="Wang J."/>
            <person name="Wong G.K.-S."/>
            <person name="Yang H."/>
        </authorList>
    </citation>
    <scope>NUCLEOTIDE SEQUENCE [LARGE SCALE GENOMIC DNA]</scope>
    <source>
        <strain>cv. Nipponbare</strain>
    </source>
</reference>
<reference key="7">
    <citation type="journal article" date="2003" name="Science">
        <title>Collection, mapping, and annotation of over 28,000 cDNA clones from japonica rice.</title>
        <authorList>
            <consortium name="The rice full-length cDNA consortium"/>
        </authorList>
    </citation>
    <scope>NUCLEOTIDE SEQUENCE [LARGE SCALE MRNA]</scope>
    <source>
        <strain>cv. Nipponbare</strain>
    </source>
</reference>
<reference key="8">
    <citation type="journal article" date="1998" name="Plant Cell Physiol.">
        <title>Isolation and characterization of a water stress-specific genomic gene, pwsi 18, from rice.</title>
        <authorList>
            <person name="Joshee N."/>
            <person name="Kisaka H."/>
            <person name="Kitagawa Y."/>
        </authorList>
    </citation>
    <scope>INDUCTION</scope>
</reference>
<reference key="9">
    <citation type="journal article" date="2007" name="Plant Sci.">
        <title>Genome-scale identification and analysis of LEA genes in rice (Oryza sativa L.).</title>
        <authorList>
            <person name="Wang X.S."/>
            <person name="Zhu H.B."/>
            <person name="Jin G.L."/>
            <person name="Liu H.L."/>
            <person name="Wu W.R."/>
            <person name="Zhu J."/>
        </authorList>
    </citation>
    <scope>GENE FAMILY</scope>
    <scope>NOMENCLATURE</scope>
</reference>
<reference key="10">
    <citation type="journal article" date="2008" name="New Phytol.">
        <title>Abscisic acid regulates gene expression in cortical fiber cells and silica cells of rice shoots.</title>
        <authorList>
            <person name="Shobbar Z.S."/>
            <person name="Oane R."/>
            <person name="Gamuyao R."/>
            <person name="De Palma J."/>
            <person name="Malboobi M.A."/>
            <person name="Karimzadeh G."/>
            <person name="Javaran M.J."/>
            <person name="Bennett J."/>
        </authorList>
    </citation>
    <scope>SUBCELLULAR LOCATION</scope>
    <scope>TISSUE SPECIFICITY</scope>
</reference>
<reference key="11">
    <citation type="journal article" date="2011" name="Transgenic Res.">
        <title>Analysis of the Wsi18, a stress-inducible promoter that is active in the whole grain of transgenic rice.</title>
        <authorList>
            <person name="Yi N."/>
            <person name="Oh S.J."/>
            <person name="Kim Y.S."/>
            <person name="Jang H.J."/>
            <person name="Park S.H."/>
            <person name="Jeong J.S."/>
            <person name="Song S.I."/>
            <person name="Choi Y.D."/>
            <person name="Kim J.K."/>
        </authorList>
    </citation>
    <scope>TISSUE SPECIFICITY</scope>
    <scope>INDUCTION</scope>
</reference>
<reference key="12">
    <citation type="journal article" date="2013" name="Planta">
        <title>Phosphorylation of D-allose by hexokinase involved in regulation of OsABF1 expression for growth inhibition in Oryza sativa L.</title>
        <authorList>
            <person name="Fukumoto T."/>
            <person name="Kano A."/>
            <person name="Ohtani K."/>
            <person name="Inoue M."/>
            <person name="Yoshihara A."/>
            <person name="Izumori K."/>
            <person name="Tajima S."/>
            <person name="Shigematsu Y."/>
            <person name="Tanaka K."/>
            <person name="Ohkouchi T."/>
            <person name="Ishida Y."/>
            <person name="Nishizawa Y."/>
            <person name="Tada Y."/>
            <person name="Ichimura K."/>
            <person name="Gomi K."/>
            <person name="Yoo S.D."/>
            <person name="Sheen J."/>
            <person name="Akimitsu K."/>
        </authorList>
    </citation>
    <scope>INDUCTION</scope>
</reference>
<reference key="13">
    <citation type="journal article" date="2014" name="Planta">
        <title>Comparative functional analysis of six drought-responsive promoters in transgenic rice.</title>
        <authorList>
            <person name="Nakashima K."/>
            <person name="Jan A."/>
            <person name="Todaka D."/>
            <person name="Maruyama K."/>
            <person name="Goto S."/>
            <person name="Shinozaki K."/>
            <person name="Yamaguchi-Shinozaki K."/>
        </authorList>
    </citation>
    <scope>TISSUE SPECIFICITY</scope>
    <scope>INDUCTION</scope>
</reference>
<name>LEA14_ORYSJ</name>
<protein>
    <recommendedName>
        <fullName evidence="9">Late embryogenesis abundant protein 14</fullName>
        <shortName evidence="9">OsLEA14</shortName>
    </recommendedName>
    <alternativeName>
        <fullName evidence="8">Protein WATER STRESS-INDUCED 18</fullName>
    </alternativeName>
</protein>
<gene>
    <name evidence="9" type="primary">LEA14</name>
    <name evidence="8" type="synonym">WSI18</name>
    <name evidence="13" type="ordered locus">Os01g0705200</name>
    <name evidence="10" type="ordered locus">LOC_Os01g50910</name>
    <name evidence="14" type="ORF">OsJ_03178</name>
    <name evidence="11" type="ORF">P0684B02.22</name>
    <name evidence="12" type="ORF">P0692C11.3</name>
</gene>
<organism>
    <name type="scientific">Oryza sativa subsp. japonica</name>
    <name type="common">Rice</name>
    <dbReference type="NCBI Taxonomy" id="39947"/>
    <lineage>
        <taxon>Eukaryota</taxon>
        <taxon>Viridiplantae</taxon>
        <taxon>Streptophyta</taxon>
        <taxon>Embryophyta</taxon>
        <taxon>Tracheophyta</taxon>
        <taxon>Spermatophyta</taxon>
        <taxon>Magnoliopsida</taxon>
        <taxon>Liliopsida</taxon>
        <taxon>Poales</taxon>
        <taxon>Poaceae</taxon>
        <taxon>BOP clade</taxon>
        <taxon>Oryzoideae</taxon>
        <taxon>Oryzeae</taxon>
        <taxon>Oryzinae</taxon>
        <taxon>Oryza</taxon>
        <taxon>Oryza sativa</taxon>
    </lineage>
</organism>